<organism>
    <name type="scientific">Clostridium perfringens (strain ATCC 13124 / DSM 756 / JCM 1290 / NCIMB 6125 / NCTC 8237 / Type A)</name>
    <dbReference type="NCBI Taxonomy" id="195103"/>
    <lineage>
        <taxon>Bacteria</taxon>
        <taxon>Bacillati</taxon>
        <taxon>Bacillota</taxon>
        <taxon>Clostridia</taxon>
        <taxon>Eubacteriales</taxon>
        <taxon>Clostridiaceae</taxon>
        <taxon>Clostridium</taxon>
    </lineage>
</organism>
<proteinExistence type="inferred from homology"/>
<accession>Q0TQ60</accession>
<reference key="1">
    <citation type="journal article" date="2006" name="Genome Res.">
        <title>Skewed genomic variability in strains of the toxigenic bacterial pathogen, Clostridium perfringens.</title>
        <authorList>
            <person name="Myers G.S.A."/>
            <person name="Rasko D.A."/>
            <person name="Cheung J.K."/>
            <person name="Ravel J."/>
            <person name="Seshadri R."/>
            <person name="DeBoy R.T."/>
            <person name="Ren Q."/>
            <person name="Varga J."/>
            <person name="Awad M.M."/>
            <person name="Brinkac L.M."/>
            <person name="Daugherty S.C."/>
            <person name="Haft D.H."/>
            <person name="Dodson R.J."/>
            <person name="Madupu R."/>
            <person name="Nelson W.C."/>
            <person name="Rosovitz M.J."/>
            <person name="Sullivan S.A."/>
            <person name="Khouri H."/>
            <person name="Dimitrov G.I."/>
            <person name="Watkins K.L."/>
            <person name="Mulligan S."/>
            <person name="Benton J."/>
            <person name="Radune D."/>
            <person name="Fisher D.J."/>
            <person name="Atkins H.S."/>
            <person name="Hiscox T."/>
            <person name="Jost B.H."/>
            <person name="Billington S.J."/>
            <person name="Songer J.G."/>
            <person name="McClane B.A."/>
            <person name="Titball R.W."/>
            <person name="Rood J.I."/>
            <person name="Melville S.B."/>
            <person name="Paulsen I.T."/>
        </authorList>
    </citation>
    <scope>NUCLEOTIDE SEQUENCE [LARGE SCALE GENOMIC DNA]</scope>
    <source>
        <strain>ATCC 13124 / DSM 756 / JCM 1290 / NCIMB 6125 / NCTC 8237 / S 107 / Type A</strain>
    </source>
</reference>
<gene>
    <name evidence="1" type="primary">bioD</name>
    <name type="ordered locus">CPF_1794</name>
</gene>
<name>BIOD_CLOP1</name>
<sequence length="228" mass="25555">MEKGVYIIGTSTDIGKTFISGLILKKLREEGRNAGYYKAVLSGAIKDKKGLIPLDCEEVMEISGLKESYENMVSYILENPYSPHLASEVEEVSISMEKIKKDYKSVRDKYDFILCEGSGGIVCPISFSEKKLMLEDIIKEFNLPIILVSNSGLGAINHTVLTVSYLRNLGLKVKGIILNKFNKSDIIHRDNKKIIKELTGVNNISTVPKIEDIEKYDLNELNEVLYGI</sequence>
<comment type="function">
    <text evidence="1">Catalyzes a mechanistically unusual reaction, the ATP-dependent insertion of CO2 between the N7 and N8 nitrogen atoms of 7,8-diaminopelargonic acid (DAPA, also called 7,8-diammoniononanoate) to form a ureido ring.</text>
</comment>
<comment type="catalytic activity">
    <reaction evidence="1">
        <text>(7R,8S)-7,8-diammoniononanoate + CO2 + ATP = (4R,5S)-dethiobiotin + ADP + phosphate + 3 H(+)</text>
        <dbReference type="Rhea" id="RHEA:15805"/>
        <dbReference type="ChEBI" id="CHEBI:15378"/>
        <dbReference type="ChEBI" id="CHEBI:16526"/>
        <dbReference type="ChEBI" id="CHEBI:30616"/>
        <dbReference type="ChEBI" id="CHEBI:43474"/>
        <dbReference type="ChEBI" id="CHEBI:149469"/>
        <dbReference type="ChEBI" id="CHEBI:149473"/>
        <dbReference type="ChEBI" id="CHEBI:456216"/>
        <dbReference type="EC" id="6.3.3.3"/>
    </reaction>
</comment>
<comment type="cofactor">
    <cofactor evidence="1">
        <name>Mg(2+)</name>
        <dbReference type="ChEBI" id="CHEBI:18420"/>
    </cofactor>
</comment>
<comment type="pathway">
    <text evidence="1">Cofactor biosynthesis; biotin biosynthesis; biotin from 7,8-diaminononanoate: step 1/2.</text>
</comment>
<comment type="subunit">
    <text evidence="1">Homodimer.</text>
</comment>
<comment type="subcellular location">
    <subcellularLocation>
        <location evidence="1">Cytoplasm</location>
    </subcellularLocation>
</comment>
<comment type="similarity">
    <text evidence="1">Belongs to the dethiobiotin synthetase family.</text>
</comment>
<protein>
    <recommendedName>
        <fullName evidence="1">ATP-dependent dethiobiotin synthetase BioD</fullName>
        <ecNumber evidence="1">6.3.3.3</ecNumber>
    </recommendedName>
    <alternativeName>
        <fullName evidence="1">DTB synthetase</fullName>
        <shortName evidence="1">DTBS</shortName>
    </alternativeName>
    <alternativeName>
        <fullName evidence="1">Dethiobiotin synthase</fullName>
    </alternativeName>
</protein>
<evidence type="ECO:0000255" key="1">
    <source>
        <dbReference type="HAMAP-Rule" id="MF_00336"/>
    </source>
</evidence>
<keyword id="KW-0067">ATP-binding</keyword>
<keyword id="KW-0093">Biotin biosynthesis</keyword>
<keyword id="KW-0963">Cytoplasm</keyword>
<keyword id="KW-0436">Ligase</keyword>
<keyword id="KW-0460">Magnesium</keyword>
<keyword id="KW-0479">Metal-binding</keyword>
<keyword id="KW-0547">Nucleotide-binding</keyword>
<feature type="chain" id="PRO_0000302499" description="ATP-dependent dethiobiotin synthetase BioD">
    <location>
        <begin position="1"/>
        <end position="228"/>
    </location>
</feature>
<feature type="active site" evidence="1">
    <location>
        <position position="38"/>
    </location>
</feature>
<feature type="binding site" evidence="1">
    <location>
        <begin position="13"/>
        <end position="18"/>
    </location>
    <ligand>
        <name>ATP</name>
        <dbReference type="ChEBI" id="CHEBI:30616"/>
    </ligand>
</feature>
<feature type="binding site" evidence="1">
    <location>
        <position position="17"/>
    </location>
    <ligand>
        <name>Mg(2+)</name>
        <dbReference type="ChEBI" id="CHEBI:18420"/>
    </ligand>
</feature>
<feature type="binding site" evidence="1">
    <location>
        <position position="42"/>
    </location>
    <ligand>
        <name>substrate</name>
    </ligand>
</feature>
<feature type="binding site" evidence="1">
    <location>
        <position position="55"/>
    </location>
    <ligand>
        <name>ATP</name>
        <dbReference type="ChEBI" id="CHEBI:30616"/>
    </ligand>
</feature>
<feature type="binding site" evidence="1">
    <location>
        <position position="55"/>
    </location>
    <ligand>
        <name>Mg(2+)</name>
        <dbReference type="ChEBI" id="CHEBI:18420"/>
    </ligand>
</feature>
<feature type="binding site" evidence="1">
    <location>
        <begin position="116"/>
        <end position="119"/>
    </location>
    <ligand>
        <name>ATP</name>
        <dbReference type="ChEBI" id="CHEBI:30616"/>
    </ligand>
</feature>
<feature type="binding site" evidence="1">
    <location>
        <position position="116"/>
    </location>
    <ligand>
        <name>Mg(2+)</name>
        <dbReference type="ChEBI" id="CHEBI:18420"/>
    </ligand>
</feature>
<feature type="binding site" evidence="1">
    <location>
        <begin position="179"/>
        <end position="180"/>
    </location>
    <ligand>
        <name>ATP</name>
        <dbReference type="ChEBI" id="CHEBI:30616"/>
    </ligand>
</feature>
<feature type="binding site" evidence="1">
    <location>
        <begin position="208"/>
        <end position="210"/>
    </location>
    <ligand>
        <name>ATP</name>
        <dbReference type="ChEBI" id="CHEBI:30616"/>
    </ligand>
</feature>
<dbReference type="EC" id="6.3.3.3" evidence="1"/>
<dbReference type="EMBL" id="CP000246">
    <property type="protein sequence ID" value="ABG83122.1"/>
    <property type="molecule type" value="Genomic_DNA"/>
</dbReference>
<dbReference type="RefSeq" id="WP_011590887.1">
    <property type="nucleotide sequence ID" value="NC_008261.1"/>
</dbReference>
<dbReference type="SMR" id="Q0TQ60"/>
<dbReference type="STRING" id="195103.CPF_1794"/>
<dbReference type="PaxDb" id="195103-CPF_1794"/>
<dbReference type="KEGG" id="cpf:CPF_1794"/>
<dbReference type="eggNOG" id="COG0132">
    <property type="taxonomic scope" value="Bacteria"/>
</dbReference>
<dbReference type="HOGENOM" id="CLU_072551_3_0_9"/>
<dbReference type="UniPathway" id="UPA00078">
    <property type="reaction ID" value="UER00161"/>
</dbReference>
<dbReference type="Proteomes" id="UP000001823">
    <property type="component" value="Chromosome"/>
</dbReference>
<dbReference type="GO" id="GO:0005829">
    <property type="term" value="C:cytosol"/>
    <property type="evidence" value="ECO:0007669"/>
    <property type="project" value="TreeGrafter"/>
</dbReference>
<dbReference type="GO" id="GO:0005524">
    <property type="term" value="F:ATP binding"/>
    <property type="evidence" value="ECO:0007669"/>
    <property type="project" value="UniProtKB-UniRule"/>
</dbReference>
<dbReference type="GO" id="GO:0004141">
    <property type="term" value="F:dethiobiotin synthase activity"/>
    <property type="evidence" value="ECO:0007669"/>
    <property type="project" value="UniProtKB-UniRule"/>
</dbReference>
<dbReference type="GO" id="GO:0000287">
    <property type="term" value="F:magnesium ion binding"/>
    <property type="evidence" value="ECO:0007669"/>
    <property type="project" value="UniProtKB-UniRule"/>
</dbReference>
<dbReference type="GO" id="GO:0009102">
    <property type="term" value="P:biotin biosynthetic process"/>
    <property type="evidence" value="ECO:0007669"/>
    <property type="project" value="UniProtKB-UniRule"/>
</dbReference>
<dbReference type="CDD" id="cd03109">
    <property type="entry name" value="DTBS"/>
    <property type="match status" value="1"/>
</dbReference>
<dbReference type="FunFam" id="3.40.50.300:FF:000292">
    <property type="entry name" value="ATP-dependent dethiobiotin synthetase BioD"/>
    <property type="match status" value="1"/>
</dbReference>
<dbReference type="Gene3D" id="3.40.50.300">
    <property type="entry name" value="P-loop containing nucleotide triphosphate hydrolases"/>
    <property type="match status" value="1"/>
</dbReference>
<dbReference type="HAMAP" id="MF_00336">
    <property type="entry name" value="BioD"/>
    <property type="match status" value="1"/>
</dbReference>
<dbReference type="InterPro" id="IPR004472">
    <property type="entry name" value="DTB_synth_BioD"/>
</dbReference>
<dbReference type="InterPro" id="IPR027417">
    <property type="entry name" value="P-loop_NTPase"/>
</dbReference>
<dbReference type="NCBIfam" id="TIGR00347">
    <property type="entry name" value="bioD"/>
    <property type="match status" value="1"/>
</dbReference>
<dbReference type="PANTHER" id="PTHR43210:SF2">
    <property type="entry name" value="ATP-DEPENDENT DETHIOBIOTIN SYNTHETASE BIOD 2"/>
    <property type="match status" value="1"/>
</dbReference>
<dbReference type="PANTHER" id="PTHR43210">
    <property type="entry name" value="DETHIOBIOTIN SYNTHETASE"/>
    <property type="match status" value="1"/>
</dbReference>
<dbReference type="Pfam" id="PF13500">
    <property type="entry name" value="AAA_26"/>
    <property type="match status" value="1"/>
</dbReference>
<dbReference type="PIRSF" id="PIRSF006755">
    <property type="entry name" value="DTB_synth"/>
    <property type="match status" value="1"/>
</dbReference>
<dbReference type="SUPFAM" id="SSF52540">
    <property type="entry name" value="P-loop containing nucleoside triphosphate hydrolases"/>
    <property type="match status" value="1"/>
</dbReference>